<reference key="1">
    <citation type="journal article" date="2007" name="BMC Genomics">
        <title>Comparative chloroplast genomics: analyses including new sequences from the angiosperms Nuphar advena and Ranunculus macranthus.</title>
        <authorList>
            <person name="Raubeson L.A."/>
            <person name="Peery R."/>
            <person name="Chumley T.W."/>
            <person name="Dziubek C."/>
            <person name="Fourcade H.M."/>
            <person name="Boore J.L."/>
            <person name="Jansen R.K."/>
        </authorList>
    </citation>
    <scope>NUCLEOTIDE SEQUENCE [LARGE SCALE GENOMIC DNA]</scope>
</reference>
<proteinExistence type="inferred from homology"/>
<name>RPOA_RANMC</name>
<comment type="function">
    <text evidence="1">DNA-dependent RNA polymerase catalyzes the transcription of DNA into RNA using the four ribonucleoside triphosphates as substrates.</text>
</comment>
<comment type="catalytic activity">
    <reaction evidence="1">
        <text>RNA(n) + a ribonucleoside 5'-triphosphate = RNA(n+1) + diphosphate</text>
        <dbReference type="Rhea" id="RHEA:21248"/>
        <dbReference type="Rhea" id="RHEA-COMP:14527"/>
        <dbReference type="Rhea" id="RHEA-COMP:17342"/>
        <dbReference type="ChEBI" id="CHEBI:33019"/>
        <dbReference type="ChEBI" id="CHEBI:61557"/>
        <dbReference type="ChEBI" id="CHEBI:140395"/>
        <dbReference type="EC" id="2.7.7.6"/>
    </reaction>
</comment>
<comment type="subunit">
    <text evidence="1">In plastids the minimal PEP RNA polymerase catalytic core is composed of four subunits: alpha, beta, beta', and beta''. When a (nuclear-encoded) sigma factor is associated with the core the holoenzyme is formed, which can initiate transcription.</text>
</comment>
<comment type="subcellular location">
    <subcellularLocation>
        <location>Plastid</location>
        <location>Chloroplast</location>
    </subcellularLocation>
</comment>
<comment type="domain">
    <text evidence="1">The N-terminal domain is essential for RNAP assembly and basal transcription, whereas the C-terminal domain is involved in interaction with transcriptional regulators and with upstream promoter elements.</text>
</comment>
<comment type="similarity">
    <text evidence="1">Belongs to the RNA polymerase alpha chain family.</text>
</comment>
<gene>
    <name evidence="1" type="primary">rpoA</name>
</gene>
<protein>
    <recommendedName>
        <fullName evidence="1">DNA-directed RNA polymerase subunit alpha</fullName>
        <shortName evidence="1">PEP</shortName>
        <ecNumber evidence="1">2.7.7.6</ecNumber>
    </recommendedName>
    <alternativeName>
        <fullName evidence="1">Plastid-encoded RNA polymerase subunit alpha</fullName>
        <shortName evidence="1">RNA polymerase subunit alpha</shortName>
    </alternativeName>
</protein>
<sequence length="346" mass="39420">MLRDEVAVSARTLQWKCVESRADSKRLYYGRFILSPLMKGQADTIGIAMRRALLGEIEGTCITRAKSEKIPHEYSTIVGIEESVHEILMNLKEIVLRSNLYGTRDASICVKGPGYVTAQDIISPPSVEIVDTTQHIASLTEPVDFCIGLQIESNRGYRMKTPNNAQKGSYPIDAVFMPVRNANHSIHSYGNGNENQEILFLEIWTNGSLTPKEALYEASRNLIDLFIPFLHAEEQDQNLKDNQKNGVTLPFFTFHDGFDKLKKNKKEIELKCIFIDQSELPSRTYNCLKRANIHTLLDLLNKSQEDLMKIEHFRIEDVKQILDIIQKHFVVIDLPKNKFLIGNPSE</sequence>
<organism>
    <name type="scientific">Ranunculus macranthus</name>
    <name type="common">Large buttercup</name>
    <dbReference type="NCBI Taxonomy" id="334596"/>
    <lineage>
        <taxon>Eukaryota</taxon>
        <taxon>Viridiplantae</taxon>
        <taxon>Streptophyta</taxon>
        <taxon>Embryophyta</taxon>
        <taxon>Tracheophyta</taxon>
        <taxon>Spermatophyta</taxon>
        <taxon>Magnoliopsida</taxon>
        <taxon>Ranunculales</taxon>
        <taxon>Ranunculaceae</taxon>
        <taxon>Ranunculoideae</taxon>
        <taxon>Ranunculeae</taxon>
        <taxon>Ranunculus</taxon>
    </lineage>
</organism>
<feature type="chain" id="PRO_0000296908" description="DNA-directed RNA polymerase subunit alpha">
    <location>
        <begin position="1"/>
        <end position="346"/>
    </location>
</feature>
<feature type="region of interest" description="Alpha N-terminal domain (alpha-NTD)" evidence="1">
    <location>
        <begin position="1"/>
        <end position="233"/>
    </location>
</feature>
<feature type="region of interest" description="Alpha C-terminal domain (alpha-CTD)" evidence="1">
    <location>
        <begin position="268"/>
        <end position="346"/>
    </location>
</feature>
<keyword id="KW-0150">Chloroplast</keyword>
<keyword id="KW-0240">DNA-directed RNA polymerase</keyword>
<keyword id="KW-0548">Nucleotidyltransferase</keyword>
<keyword id="KW-0934">Plastid</keyword>
<keyword id="KW-0804">Transcription</keyword>
<keyword id="KW-0808">Transferase</keyword>
<geneLocation type="chloroplast"/>
<accession>A1XGS0</accession>
<dbReference type="EC" id="2.7.7.6" evidence="1"/>
<dbReference type="EMBL" id="DQ359689">
    <property type="protein sequence ID" value="ABC70788.1"/>
    <property type="molecule type" value="Genomic_DNA"/>
</dbReference>
<dbReference type="RefSeq" id="YP_001004218.1">
    <property type="nucleotide sequence ID" value="NC_008796.1"/>
</dbReference>
<dbReference type="SMR" id="A1XGS0"/>
<dbReference type="GeneID" id="4712109"/>
<dbReference type="GO" id="GO:0009507">
    <property type="term" value="C:chloroplast"/>
    <property type="evidence" value="ECO:0007669"/>
    <property type="project" value="UniProtKB-SubCell"/>
</dbReference>
<dbReference type="GO" id="GO:0000428">
    <property type="term" value="C:DNA-directed RNA polymerase complex"/>
    <property type="evidence" value="ECO:0007669"/>
    <property type="project" value="UniProtKB-KW"/>
</dbReference>
<dbReference type="GO" id="GO:0005739">
    <property type="term" value="C:mitochondrion"/>
    <property type="evidence" value="ECO:0007669"/>
    <property type="project" value="GOC"/>
</dbReference>
<dbReference type="GO" id="GO:0003677">
    <property type="term" value="F:DNA binding"/>
    <property type="evidence" value="ECO:0007669"/>
    <property type="project" value="UniProtKB-UniRule"/>
</dbReference>
<dbReference type="GO" id="GO:0003899">
    <property type="term" value="F:DNA-directed RNA polymerase activity"/>
    <property type="evidence" value="ECO:0007669"/>
    <property type="project" value="UniProtKB-UniRule"/>
</dbReference>
<dbReference type="GO" id="GO:0046983">
    <property type="term" value="F:protein dimerization activity"/>
    <property type="evidence" value="ECO:0007669"/>
    <property type="project" value="InterPro"/>
</dbReference>
<dbReference type="GO" id="GO:0006351">
    <property type="term" value="P:DNA-templated transcription"/>
    <property type="evidence" value="ECO:0007669"/>
    <property type="project" value="UniProtKB-UniRule"/>
</dbReference>
<dbReference type="CDD" id="cd06928">
    <property type="entry name" value="RNAP_alpha_NTD"/>
    <property type="match status" value="1"/>
</dbReference>
<dbReference type="FunFam" id="1.10.150.20:FF:000021">
    <property type="entry name" value="DNA-directed RNA polymerase subunit alpha"/>
    <property type="match status" value="1"/>
</dbReference>
<dbReference type="FunFam" id="2.170.120.12:FF:000001">
    <property type="entry name" value="DNA-directed RNA polymerase subunit alpha"/>
    <property type="match status" value="1"/>
</dbReference>
<dbReference type="FunFam" id="3.30.1360.10:FF:000039">
    <property type="entry name" value="DNA-directed RNA polymerase subunit alpha"/>
    <property type="match status" value="1"/>
</dbReference>
<dbReference type="Gene3D" id="1.10.150.20">
    <property type="entry name" value="5' to 3' exonuclease, C-terminal subdomain"/>
    <property type="match status" value="1"/>
</dbReference>
<dbReference type="Gene3D" id="2.170.120.12">
    <property type="entry name" value="DNA-directed RNA polymerase, insert domain"/>
    <property type="match status" value="1"/>
</dbReference>
<dbReference type="Gene3D" id="3.30.1360.10">
    <property type="entry name" value="RNA polymerase, RBP11-like subunit"/>
    <property type="match status" value="1"/>
</dbReference>
<dbReference type="HAMAP" id="MF_00059">
    <property type="entry name" value="RNApol_bact_RpoA"/>
    <property type="match status" value="1"/>
</dbReference>
<dbReference type="InterPro" id="IPR011262">
    <property type="entry name" value="DNA-dir_RNA_pol_insert"/>
</dbReference>
<dbReference type="InterPro" id="IPR011263">
    <property type="entry name" value="DNA-dir_RNA_pol_RpoA/D/Rpb3"/>
</dbReference>
<dbReference type="InterPro" id="IPR011773">
    <property type="entry name" value="DNA-dir_RpoA"/>
</dbReference>
<dbReference type="InterPro" id="IPR036603">
    <property type="entry name" value="RBP11-like"/>
</dbReference>
<dbReference type="InterPro" id="IPR011260">
    <property type="entry name" value="RNAP_asu_C"/>
</dbReference>
<dbReference type="InterPro" id="IPR036643">
    <property type="entry name" value="RNApol_insert_sf"/>
</dbReference>
<dbReference type="NCBIfam" id="TIGR02027">
    <property type="entry name" value="rpoA"/>
    <property type="match status" value="1"/>
</dbReference>
<dbReference type="Pfam" id="PF01000">
    <property type="entry name" value="RNA_pol_A_bac"/>
    <property type="match status" value="1"/>
</dbReference>
<dbReference type="Pfam" id="PF03118">
    <property type="entry name" value="RNA_pol_A_CTD"/>
    <property type="match status" value="1"/>
</dbReference>
<dbReference type="Pfam" id="PF01193">
    <property type="entry name" value="RNA_pol_L"/>
    <property type="match status" value="1"/>
</dbReference>
<dbReference type="SMART" id="SM00662">
    <property type="entry name" value="RPOLD"/>
    <property type="match status" value="1"/>
</dbReference>
<dbReference type="SUPFAM" id="SSF47789">
    <property type="entry name" value="C-terminal domain of RNA polymerase alpha subunit"/>
    <property type="match status" value="1"/>
</dbReference>
<dbReference type="SUPFAM" id="SSF56553">
    <property type="entry name" value="Insert subdomain of RNA polymerase alpha subunit"/>
    <property type="match status" value="1"/>
</dbReference>
<dbReference type="SUPFAM" id="SSF55257">
    <property type="entry name" value="RBP11-like subunits of RNA polymerase"/>
    <property type="match status" value="1"/>
</dbReference>
<evidence type="ECO:0000255" key="1">
    <source>
        <dbReference type="HAMAP-Rule" id="MF_00059"/>
    </source>
</evidence>